<reference key="1">
    <citation type="journal article" date="1999" name="Nature">
        <title>Sequence and analysis of chromosome 2 of the plant Arabidopsis thaliana.</title>
        <authorList>
            <person name="Lin X."/>
            <person name="Kaul S."/>
            <person name="Rounsley S.D."/>
            <person name="Shea T.P."/>
            <person name="Benito M.-I."/>
            <person name="Town C.D."/>
            <person name="Fujii C.Y."/>
            <person name="Mason T.M."/>
            <person name="Bowman C.L."/>
            <person name="Barnstead M.E."/>
            <person name="Feldblyum T.V."/>
            <person name="Buell C.R."/>
            <person name="Ketchum K.A."/>
            <person name="Lee J.J."/>
            <person name="Ronning C.M."/>
            <person name="Koo H.L."/>
            <person name="Moffat K.S."/>
            <person name="Cronin L.A."/>
            <person name="Shen M."/>
            <person name="Pai G."/>
            <person name="Van Aken S."/>
            <person name="Umayam L."/>
            <person name="Tallon L.J."/>
            <person name="Gill J.E."/>
            <person name="Adams M.D."/>
            <person name="Carrera A.J."/>
            <person name="Creasy T.H."/>
            <person name="Goodman H.M."/>
            <person name="Somerville C.R."/>
            <person name="Copenhaver G.P."/>
            <person name="Preuss D."/>
            <person name="Nierman W.C."/>
            <person name="White O."/>
            <person name="Eisen J.A."/>
            <person name="Salzberg S.L."/>
            <person name="Fraser C.M."/>
            <person name="Venter J.C."/>
        </authorList>
    </citation>
    <scope>NUCLEOTIDE SEQUENCE [LARGE SCALE GENOMIC DNA]</scope>
    <source>
        <strain>cv. Columbia</strain>
    </source>
</reference>
<reference key="2">
    <citation type="journal article" date="2017" name="Plant J.">
        <title>Araport11: a complete reannotation of the Arabidopsis thaliana reference genome.</title>
        <authorList>
            <person name="Cheng C.Y."/>
            <person name="Krishnakumar V."/>
            <person name="Chan A.P."/>
            <person name="Thibaud-Nissen F."/>
            <person name="Schobel S."/>
            <person name="Town C.D."/>
        </authorList>
    </citation>
    <scope>GENOME REANNOTATION</scope>
    <source>
        <strain>cv. Columbia</strain>
    </source>
</reference>
<reference key="3">
    <citation type="journal article" date="2003" name="Science">
        <title>Empirical analysis of transcriptional activity in the Arabidopsis genome.</title>
        <authorList>
            <person name="Yamada K."/>
            <person name="Lim J."/>
            <person name="Dale J.M."/>
            <person name="Chen H."/>
            <person name="Shinn P."/>
            <person name="Palm C.J."/>
            <person name="Southwick A.M."/>
            <person name="Wu H.C."/>
            <person name="Kim C.J."/>
            <person name="Nguyen M."/>
            <person name="Pham P.K."/>
            <person name="Cheuk R.F."/>
            <person name="Karlin-Newmann G."/>
            <person name="Liu S.X."/>
            <person name="Lam B."/>
            <person name="Sakano H."/>
            <person name="Wu T."/>
            <person name="Yu G."/>
            <person name="Miranda M."/>
            <person name="Quach H.L."/>
            <person name="Tripp M."/>
            <person name="Chang C.H."/>
            <person name="Lee J.M."/>
            <person name="Toriumi M.J."/>
            <person name="Chan M.M."/>
            <person name="Tang C.C."/>
            <person name="Onodera C.S."/>
            <person name="Deng J.M."/>
            <person name="Akiyama K."/>
            <person name="Ansari Y."/>
            <person name="Arakawa T."/>
            <person name="Banh J."/>
            <person name="Banno F."/>
            <person name="Bowser L."/>
            <person name="Brooks S.Y."/>
            <person name="Carninci P."/>
            <person name="Chao Q."/>
            <person name="Choy N."/>
            <person name="Enju A."/>
            <person name="Goldsmith A.D."/>
            <person name="Gurjal M."/>
            <person name="Hansen N.F."/>
            <person name="Hayashizaki Y."/>
            <person name="Johnson-Hopson C."/>
            <person name="Hsuan V.W."/>
            <person name="Iida K."/>
            <person name="Karnes M."/>
            <person name="Khan S."/>
            <person name="Koesema E."/>
            <person name="Ishida J."/>
            <person name="Jiang P.X."/>
            <person name="Jones T."/>
            <person name="Kawai J."/>
            <person name="Kamiya A."/>
            <person name="Meyers C."/>
            <person name="Nakajima M."/>
            <person name="Narusaka M."/>
            <person name="Seki M."/>
            <person name="Sakurai T."/>
            <person name="Satou M."/>
            <person name="Tamse R."/>
            <person name="Vaysberg M."/>
            <person name="Wallender E.K."/>
            <person name="Wong C."/>
            <person name="Yamamura Y."/>
            <person name="Yuan S."/>
            <person name="Shinozaki K."/>
            <person name="Davis R.W."/>
            <person name="Theologis A."/>
            <person name="Ecker J.R."/>
        </authorList>
    </citation>
    <scope>NUCLEOTIDE SEQUENCE [LARGE SCALE MRNA]</scope>
    <source>
        <strain>cv. Columbia</strain>
    </source>
</reference>
<reference key="4">
    <citation type="journal article" date="2006" name="Plant Physiol.">
        <title>A eukaryotic factor required for accumulation of the chloroplast NAD(P)H dehydrogenase complex in Arabidopsis.</title>
        <authorList>
            <person name="Muraoka R."/>
            <person name="Okuda K."/>
            <person name="Kobayashi Y."/>
            <person name="Shikanai T."/>
        </authorList>
    </citation>
    <scope>FUNCTION</scope>
    <scope>SUBCELLULAR LOCATION</scope>
    <scope>DISRUPTION PHENOTYPE</scope>
</reference>
<gene>
    <name evidence="4" type="primary">CRR3</name>
    <name evidence="7" type="ordered locus">At2g01590</name>
</gene>
<keyword id="KW-0143">Chaperone</keyword>
<keyword id="KW-0150">Chloroplast</keyword>
<keyword id="KW-0472">Membrane</keyword>
<keyword id="KW-0934">Plastid</keyword>
<keyword id="KW-1185">Reference proteome</keyword>
<keyword id="KW-0793">Thylakoid</keyword>
<keyword id="KW-0809">Transit peptide</keyword>
<keyword id="KW-0812">Transmembrane</keyword>
<keyword id="KW-1133">Transmembrane helix</keyword>
<sequence>MAVLSTIYSITRASTPTMASLTNDSPSPLPSSSPSKLPSPTSPSKKPLKLRQVSKQMGSQNQQRRGNKPSIAQIERAFGSGSYRDSEGEMDMNTVFDELLLGHANKFESKIEKKLREIGEIFVARTEPKLRSSGKPVLMFTIQWILPIWIMSLLVACGVIKLPFSIPFLDDLIM</sequence>
<name>CRR3_ARATH</name>
<feature type="transit peptide" description="Chloroplast" evidence="1">
    <location>
        <begin position="1"/>
        <end position="54"/>
    </location>
</feature>
<feature type="chain" id="PRO_0000433242" description="Probable NAD(P)H dehydrogenase subunit CRR3, chloroplastic" evidence="1">
    <location>
        <begin position="55"/>
        <end position="174"/>
    </location>
</feature>
<feature type="transmembrane region" description="Helical" evidence="1">
    <location>
        <begin position="140"/>
        <end position="160"/>
    </location>
</feature>
<feature type="region of interest" description="Disordered" evidence="2">
    <location>
        <begin position="14"/>
        <end position="71"/>
    </location>
</feature>
<feature type="compositionally biased region" description="Polar residues" evidence="2">
    <location>
        <begin position="14"/>
        <end position="24"/>
    </location>
</feature>
<feature type="compositionally biased region" description="Low complexity" evidence="2">
    <location>
        <begin position="30"/>
        <end position="45"/>
    </location>
</feature>
<feature type="compositionally biased region" description="Polar residues" evidence="2">
    <location>
        <begin position="53"/>
        <end position="64"/>
    </location>
</feature>
<dbReference type="EMBL" id="AC005560">
    <property type="protein sequence ID" value="AAC67335.1"/>
    <property type="molecule type" value="Genomic_DNA"/>
</dbReference>
<dbReference type="EMBL" id="CP002685">
    <property type="protein sequence ID" value="AEC05471.1"/>
    <property type="molecule type" value="Genomic_DNA"/>
</dbReference>
<dbReference type="EMBL" id="AY035185">
    <property type="protein sequence ID" value="AAK59689.1"/>
    <property type="molecule type" value="mRNA"/>
</dbReference>
<dbReference type="EMBL" id="AY113895">
    <property type="protein sequence ID" value="AAM44943.1"/>
    <property type="molecule type" value="mRNA"/>
</dbReference>
<dbReference type="PIR" id="F84426">
    <property type="entry name" value="F84426"/>
</dbReference>
<dbReference type="RefSeq" id="NP_565266.1">
    <property type="nucleotide sequence ID" value="NM_126220.4"/>
</dbReference>
<dbReference type="FunCoup" id="Q9ZVE7">
    <property type="interactions" value="1507"/>
</dbReference>
<dbReference type="STRING" id="3702.Q9ZVE7"/>
<dbReference type="PaxDb" id="3702-AT2G01590.1"/>
<dbReference type="ProteomicsDB" id="220306"/>
<dbReference type="EnsemblPlants" id="AT2G01590.1">
    <property type="protein sequence ID" value="AT2G01590.1"/>
    <property type="gene ID" value="AT2G01590"/>
</dbReference>
<dbReference type="GeneID" id="814688"/>
<dbReference type="Gramene" id="AT2G01590.1">
    <property type="protein sequence ID" value="AT2G01590.1"/>
    <property type="gene ID" value="AT2G01590"/>
</dbReference>
<dbReference type="KEGG" id="ath:AT2G01590"/>
<dbReference type="Araport" id="AT2G01590"/>
<dbReference type="TAIR" id="AT2G01590">
    <property type="gene designation" value="CRR3"/>
</dbReference>
<dbReference type="eggNOG" id="ENOG502S6AS">
    <property type="taxonomic scope" value="Eukaryota"/>
</dbReference>
<dbReference type="HOGENOM" id="CLU_122605_0_0_1"/>
<dbReference type="InParanoid" id="Q9ZVE7"/>
<dbReference type="OMA" id="MFTMQWI"/>
<dbReference type="OrthoDB" id="786513at2759"/>
<dbReference type="PhylomeDB" id="Q9ZVE7"/>
<dbReference type="PRO" id="PR:Q9ZVE7"/>
<dbReference type="Proteomes" id="UP000006548">
    <property type="component" value="Chromosome 2"/>
</dbReference>
<dbReference type="ExpressionAtlas" id="Q9ZVE7">
    <property type="expression patterns" value="baseline and differential"/>
</dbReference>
<dbReference type="GO" id="GO:0009507">
    <property type="term" value="C:chloroplast"/>
    <property type="evidence" value="ECO:0000314"/>
    <property type="project" value="TAIR"/>
</dbReference>
<dbReference type="GO" id="GO:0009535">
    <property type="term" value="C:chloroplast thylakoid membrane"/>
    <property type="evidence" value="ECO:0007669"/>
    <property type="project" value="UniProtKB-SubCell"/>
</dbReference>
<dbReference type="GO" id="GO:0016020">
    <property type="term" value="C:membrane"/>
    <property type="evidence" value="ECO:0000314"/>
    <property type="project" value="TAIR"/>
</dbReference>
<dbReference type="GO" id="GO:0010598">
    <property type="term" value="C:NAD(P)H dehydrogenase complex (plastoquinone)"/>
    <property type="evidence" value="ECO:0000303"/>
    <property type="project" value="TAIR"/>
</dbReference>
<dbReference type="GO" id="GO:0009773">
    <property type="term" value="P:photosynthetic electron transport in photosystem I"/>
    <property type="evidence" value="ECO:0000304"/>
    <property type="project" value="TAIR"/>
</dbReference>
<dbReference type="InterPro" id="IPR038931">
    <property type="entry name" value="CRR3"/>
</dbReference>
<dbReference type="PANTHER" id="PTHR36340">
    <property type="entry name" value="NAD(P)H DEHYDROGENASE SUBUNIT CRR3, CHLOROPLASTIC-RELATED"/>
    <property type="match status" value="1"/>
</dbReference>
<dbReference type="PANTHER" id="PTHR36340:SF1">
    <property type="entry name" value="NAD(P)H DEHYDROGENASE SUBUNIT CRR3, CHLOROPLASTIC-RELATED"/>
    <property type="match status" value="1"/>
</dbReference>
<proteinExistence type="evidence at transcript level"/>
<protein>
    <recommendedName>
        <fullName evidence="5">Probable NAD(P)H dehydrogenase subunit CRR3, chloroplastic</fullName>
        <shortName evidence="5">Probable NDH subunit CRR3</shortName>
    </recommendedName>
    <alternativeName>
        <fullName evidence="4">Protein CHLORORESPIRATORY REDUCTION 3</fullName>
    </alternativeName>
</protein>
<comment type="function">
    <text evidence="3">Probable subunit of the chloroplast NAD(P)H dehydrogenase (NDH) complex of the photosynthetic electron transport chain. Required for both formation and activity of NDH. May function in assembly or stabilization of the NDH complex.</text>
</comment>
<comment type="subcellular location">
    <subcellularLocation>
        <location evidence="3">Plastid</location>
        <location evidence="3">Chloroplast thylakoid membrane</location>
        <topology evidence="1">Single-pass membrane protein</topology>
    </subcellularLocation>
</comment>
<comment type="disruption phenotype">
    <text evidence="3">Impaired chloroplastic NAD(P)H dehydrogenase (NDH) activity, probably due to a reduced stability of the NDH complex.</text>
</comment>
<comment type="miscellaneous">
    <text evidence="6">CRR3 is not conserved in cyanobacteria and seems to be a subunit of the NDH complex which is specific to the chloroplast.</text>
</comment>
<accession>Q9ZVE7</accession>
<organism>
    <name type="scientific">Arabidopsis thaliana</name>
    <name type="common">Mouse-ear cress</name>
    <dbReference type="NCBI Taxonomy" id="3702"/>
    <lineage>
        <taxon>Eukaryota</taxon>
        <taxon>Viridiplantae</taxon>
        <taxon>Streptophyta</taxon>
        <taxon>Embryophyta</taxon>
        <taxon>Tracheophyta</taxon>
        <taxon>Spermatophyta</taxon>
        <taxon>Magnoliopsida</taxon>
        <taxon>eudicotyledons</taxon>
        <taxon>Gunneridae</taxon>
        <taxon>Pentapetalae</taxon>
        <taxon>rosids</taxon>
        <taxon>malvids</taxon>
        <taxon>Brassicales</taxon>
        <taxon>Brassicaceae</taxon>
        <taxon>Camelineae</taxon>
        <taxon>Arabidopsis</taxon>
    </lineage>
</organism>
<evidence type="ECO:0000255" key="1"/>
<evidence type="ECO:0000256" key="2">
    <source>
        <dbReference type="SAM" id="MobiDB-lite"/>
    </source>
</evidence>
<evidence type="ECO:0000269" key="3">
    <source>
    </source>
</evidence>
<evidence type="ECO:0000303" key="4">
    <source>
    </source>
</evidence>
<evidence type="ECO:0000305" key="5"/>
<evidence type="ECO:0000305" key="6">
    <source>
    </source>
</evidence>
<evidence type="ECO:0000312" key="7">
    <source>
        <dbReference type="Araport" id="AT2G01590"/>
    </source>
</evidence>